<comment type="function">
    <text evidence="1">The RuvA-RuvB-RuvC complex processes Holliday junction (HJ) DNA during genetic recombination and DNA repair, while the RuvA-RuvB complex plays an important role in the rescue of blocked DNA replication forks via replication fork reversal (RFR). RuvA specifically binds to HJ cruciform DNA, conferring on it an open structure. The RuvB hexamer acts as an ATP-dependent pump, pulling dsDNA into and through the RuvAB complex. RuvB forms 2 homohexamers on either side of HJ DNA bound by 1 or 2 RuvA tetramers; 4 subunits per hexamer contact DNA at a time. Coordinated motions by a converter formed by DNA-disengaged RuvB subunits stimulates ATP hydrolysis and nucleotide exchange. Immobilization of the converter enables RuvB to convert the ATP-contained energy into a lever motion, pulling 2 nucleotides of DNA out of the RuvA tetramer per ATP hydrolyzed, thus driving DNA branch migration. The RuvB motors rotate together with the DNA substrate, which together with the progressing nucleotide cycle form the mechanistic basis for DNA recombination by continuous HJ branch migration. Branch migration allows RuvC to scan DNA until it finds its consensus sequence, where it cleaves and resolves cruciform DNA.</text>
</comment>
<comment type="catalytic activity">
    <reaction evidence="1">
        <text>ATP + H2O = ADP + phosphate + H(+)</text>
        <dbReference type="Rhea" id="RHEA:13065"/>
        <dbReference type="ChEBI" id="CHEBI:15377"/>
        <dbReference type="ChEBI" id="CHEBI:15378"/>
        <dbReference type="ChEBI" id="CHEBI:30616"/>
        <dbReference type="ChEBI" id="CHEBI:43474"/>
        <dbReference type="ChEBI" id="CHEBI:456216"/>
    </reaction>
</comment>
<comment type="subunit">
    <text evidence="1">Homohexamer. Forms an RuvA(8)-RuvB(12)-Holliday junction (HJ) complex. HJ DNA is sandwiched between 2 RuvA tetramers; dsDNA enters through RuvA and exits via RuvB. An RuvB hexamer assembles on each DNA strand where it exits the tetramer. Each RuvB hexamer is contacted by two RuvA subunits (via domain III) on 2 adjacent RuvB subunits; this complex drives branch migration. In the full resolvosome a probable DNA-RuvA(4)-RuvB(12)-RuvC(2) complex forms which resolves the HJ.</text>
</comment>
<comment type="subcellular location">
    <subcellularLocation>
        <location evidence="1">Cytoplasm</location>
    </subcellularLocation>
</comment>
<comment type="domain">
    <text evidence="1">Has 3 domains, the large (RuvB-L) and small ATPase (RuvB-S) domains and the C-terminal head (RuvB-H) domain. The head domain binds DNA, while the ATPase domains jointly bind ATP, ADP or are empty depending on the state of the subunit in the translocation cycle. During a single DNA translocation step the structure of each domain remains the same, but their relative positions change.</text>
</comment>
<comment type="similarity">
    <text evidence="1">Belongs to the RuvB family.</text>
</comment>
<comment type="sequence caution" evidence="2">
    <conflict type="erroneous initiation">
        <sequence resource="EMBL-CDS" id="AAT56613"/>
    </conflict>
    <text>Truncated N-terminus.</text>
</comment>
<proteinExistence type="inferred from homology"/>
<keyword id="KW-0067">ATP-binding</keyword>
<keyword id="KW-0963">Cytoplasm</keyword>
<keyword id="KW-0227">DNA damage</keyword>
<keyword id="KW-0233">DNA recombination</keyword>
<keyword id="KW-0234">DNA repair</keyword>
<keyword id="KW-0238">DNA-binding</keyword>
<keyword id="KW-0378">Hydrolase</keyword>
<keyword id="KW-0547">Nucleotide-binding</keyword>
<keyword id="KW-1185">Reference proteome</keyword>
<name>RUVB_BACAN</name>
<evidence type="ECO:0000255" key="1">
    <source>
        <dbReference type="HAMAP-Rule" id="MF_00016"/>
    </source>
</evidence>
<evidence type="ECO:0000305" key="2"/>
<protein>
    <recommendedName>
        <fullName evidence="1">Holliday junction branch migration complex subunit RuvB</fullName>
        <ecNumber evidence="1">3.6.4.-</ecNumber>
    </recommendedName>
</protein>
<feature type="chain" id="PRO_0000165484" description="Holliday junction branch migration complex subunit RuvB">
    <location>
        <begin position="1"/>
        <end position="333"/>
    </location>
</feature>
<feature type="region of interest" description="Large ATPase domain (RuvB-L)" evidence="1">
    <location>
        <begin position="1"/>
        <end position="182"/>
    </location>
</feature>
<feature type="region of interest" description="Small ATPAse domain (RuvB-S)" evidence="1">
    <location>
        <begin position="183"/>
        <end position="253"/>
    </location>
</feature>
<feature type="region of interest" description="Head domain (RuvB-H)" evidence="1">
    <location>
        <begin position="256"/>
        <end position="333"/>
    </location>
</feature>
<feature type="binding site" evidence="1">
    <location>
        <position position="21"/>
    </location>
    <ligand>
        <name>ATP</name>
        <dbReference type="ChEBI" id="CHEBI:30616"/>
    </ligand>
</feature>
<feature type="binding site" evidence="1">
    <location>
        <position position="22"/>
    </location>
    <ligand>
        <name>ATP</name>
        <dbReference type="ChEBI" id="CHEBI:30616"/>
    </ligand>
</feature>
<feature type="binding site" evidence="1">
    <location>
        <position position="63"/>
    </location>
    <ligand>
        <name>ATP</name>
        <dbReference type="ChEBI" id="CHEBI:30616"/>
    </ligand>
</feature>
<feature type="binding site" evidence="1">
    <location>
        <position position="66"/>
    </location>
    <ligand>
        <name>ATP</name>
        <dbReference type="ChEBI" id="CHEBI:30616"/>
    </ligand>
</feature>
<feature type="binding site" evidence="1">
    <location>
        <position position="67"/>
    </location>
    <ligand>
        <name>ATP</name>
        <dbReference type="ChEBI" id="CHEBI:30616"/>
    </ligand>
</feature>
<feature type="binding site" evidence="1">
    <location>
        <position position="67"/>
    </location>
    <ligand>
        <name>Mg(2+)</name>
        <dbReference type="ChEBI" id="CHEBI:18420"/>
    </ligand>
</feature>
<feature type="binding site" evidence="1">
    <location>
        <position position="68"/>
    </location>
    <ligand>
        <name>ATP</name>
        <dbReference type="ChEBI" id="CHEBI:30616"/>
    </ligand>
</feature>
<feature type="binding site" evidence="1">
    <location>
        <begin position="129"/>
        <end position="131"/>
    </location>
    <ligand>
        <name>ATP</name>
        <dbReference type="ChEBI" id="CHEBI:30616"/>
    </ligand>
</feature>
<feature type="binding site" evidence="1">
    <location>
        <position position="172"/>
    </location>
    <ligand>
        <name>ATP</name>
        <dbReference type="ChEBI" id="CHEBI:30616"/>
    </ligand>
</feature>
<feature type="binding site" evidence="1">
    <location>
        <position position="182"/>
    </location>
    <ligand>
        <name>ATP</name>
        <dbReference type="ChEBI" id="CHEBI:30616"/>
    </ligand>
</feature>
<feature type="binding site" evidence="1">
    <location>
        <position position="219"/>
    </location>
    <ligand>
        <name>ATP</name>
        <dbReference type="ChEBI" id="CHEBI:30616"/>
    </ligand>
</feature>
<feature type="binding site" evidence="1">
    <location>
        <position position="311"/>
    </location>
    <ligand>
        <name>DNA</name>
        <dbReference type="ChEBI" id="CHEBI:16991"/>
    </ligand>
</feature>
<feature type="binding site" evidence="1">
    <location>
        <position position="316"/>
    </location>
    <ligand>
        <name>DNA</name>
        <dbReference type="ChEBI" id="CHEBI:16991"/>
    </ligand>
</feature>
<organism>
    <name type="scientific">Bacillus anthracis</name>
    <dbReference type="NCBI Taxonomy" id="1392"/>
    <lineage>
        <taxon>Bacteria</taxon>
        <taxon>Bacillati</taxon>
        <taxon>Bacillota</taxon>
        <taxon>Bacilli</taxon>
        <taxon>Bacillales</taxon>
        <taxon>Bacillaceae</taxon>
        <taxon>Bacillus</taxon>
        <taxon>Bacillus cereus group</taxon>
    </lineage>
</organism>
<accession>Q81LG9</accession>
<accession>Q6HSX6</accession>
<accession>Q6KM64</accession>
<gene>
    <name evidence="1" type="primary">ruvB</name>
    <name type="ordered locus">BA_4650</name>
    <name type="ordered locus">GBAA_4650</name>
    <name type="ordered locus">BAS4315</name>
</gene>
<sequence length="333" mass="37036">MDERLLSGESAYEDADLEYSLRPQTLRQYIGQDKAKHNLEVFIEAAKMREETLDHVLLYGPPGLGKTTLANIIANEMGVNVRTTSGPAIERPGDLAAVLTSLQPGDVLFIDEIHRLHRSIEEVLYPAMEDFCLDIVIGKGPSARSVRLDLPPFTLVGATTRAGALSAPLRDRFGVLSRLEYYTVDQLSAIVERTAEVFEVEIDSLAALEIARRARGTPRIANRLLRRVRDFAQVRGNGTVTMEITQMALELLQVDKLGLDHIDHKLLLGIIEKFHGGPVGLETVSATIGEESHTIEDVYEPYLLQIGFLQRTPRGRIVTPLAYEHFGMEMPKV</sequence>
<reference key="1">
    <citation type="journal article" date="2003" name="Nature">
        <title>The genome sequence of Bacillus anthracis Ames and comparison to closely related bacteria.</title>
        <authorList>
            <person name="Read T.D."/>
            <person name="Peterson S.N."/>
            <person name="Tourasse N.J."/>
            <person name="Baillie L.W."/>
            <person name="Paulsen I.T."/>
            <person name="Nelson K.E."/>
            <person name="Tettelin H."/>
            <person name="Fouts D.E."/>
            <person name="Eisen J.A."/>
            <person name="Gill S.R."/>
            <person name="Holtzapple E.K."/>
            <person name="Okstad O.A."/>
            <person name="Helgason E."/>
            <person name="Rilstone J."/>
            <person name="Wu M."/>
            <person name="Kolonay J.F."/>
            <person name="Beanan M.J."/>
            <person name="Dodson R.J."/>
            <person name="Brinkac L.M."/>
            <person name="Gwinn M.L."/>
            <person name="DeBoy R.T."/>
            <person name="Madpu R."/>
            <person name="Daugherty S.C."/>
            <person name="Durkin A.S."/>
            <person name="Haft D.H."/>
            <person name="Nelson W.C."/>
            <person name="Peterson J.D."/>
            <person name="Pop M."/>
            <person name="Khouri H.M."/>
            <person name="Radune D."/>
            <person name="Benton J.L."/>
            <person name="Mahamoud Y."/>
            <person name="Jiang L."/>
            <person name="Hance I.R."/>
            <person name="Weidman J.F."/>
            <person name="Berry K.J."/>
            <person name="Plaut R.D."/>
            <person name="Wolf A.M."/>
            <person name="Watkins K.L."/>
            <person name="Nierman W.C."/>
            <person name="Hazen A."/>
            <person name="Cline R.T."/>
            <person name="Redmond C."/>
            <person name="Thwaite J.E."/>
            <person name="White O."/>
            <person name="Salzberg S.L."/>
            <person name="Thomason B."/>
            <person name="Friedlander A.M."/>
            <person name="Koehler T.M."/>
            <person name="Hanna P.C."/>
            <person name="Kolstoe A.-B."/>
            <person name="Fraser C.M."/>
        </authorList>
    </citation>
    <scope>NUCLEOTIDE SEQUENCE [LARGE SCALE GENOMIC DNA]</scope>
    <source>
        <strain>Ames / isolate Porton</strain>
    </source>
</reference>
<reference key="2">
    <citation type="journal article" date="2009" name="J. Bacteriol.">
        <title>The complete genome sequence of Bacillus anthracis Ames 'Ancestor'.</title>
        <authorList>
            <person name="Ravel J."/>
            <person name="Jiang L."/>
            <person name="Stanley S.T."/>
            <person name="Wilson M.R."/>
            <person name="Decker R.S."/>
            <person name="Read T.D."/>
            <person name="Worsham P."/>
            <person name="Keim P.S."/>
            <person name="Salzberg S.L."/>
            <person name="Fraser-Liggett C.M."/>
            <person name="Rasko D.A."/>
        </authorList>
    </citation>
    <scope>NUCLEOTIDE SEQUENCE [LARGE SCALE GENOMIC DNA]</scope>
    <source>
        <strain>Ames ancestor</strain>
    </source>
</reference>
<reference key="3">
    <citation type="submission" date="2004-01" db="EMBL/GenBank/DDBJ databases">
        <title>Complete genome sequence of Bacillus anthracis Sterne.</title>
        <authorList>
            <person name="Brettin T.S."/>
            <person name="Bruce D."/>
            <person name="Challacombe J.F."/>
            <person name="Gilna P."/>
            <person name="Han C."/>
            <person name="Hill K."/>
            <person name="Hitchcock P."/>
            <person name="Jackson P."/>
            <person name="Keim P."/>
            <person name="Longmire J."/>
            <person name="Lucas S."/>
            <person name="Okinaka R."/>
            <person name="Richardson P."/>
            <person name="Rubin E."/>
            <person name="Tice H."/>
        </authorList>
    </citation>
    <scope>NUCLEOTIDE SEQUENCE [LARGE SCALE GENOMIC DNA]</scope>
    <source>
        <strain>Sterne</strain>
    </source>
</reference>
<dbReference type="EC" id="3.6.4.-" evidence="1"/>
<dbReference type="EMBL" id="AE016879">
    <property type="protein sequence ID" value="AAP28353.1"/>
    <property type="molecule type" value="Genomic_DNA"/>
</dbReference>
<dbReference type="EMBL" id="AE017334">
    <property type="protein sequence ID" value="AAT33772.1"/>
    <property type="molecule type" value="Genomic_DNA"/>
</dbReference>
<dbReference type="EMBL" id="AE017225">
    <property type="protein sequence ID" value="AAT56613.1"/>
    <property type="status" value="ALT_INIT"/>
    <property type="molecule type" value="Genomic_DNA"/>
</dbReference>
<dbReference type="RefSeq" id="NP_846867.1">
    <property type="nucleotide sequence ID" value="NC_003997.3"/>
</dbReference>
<dbReference type="RefSeq" id="WP_000344455.1">
    <property type="nucleotide sequence ID" value="NZ_WXXJ01000027.1"/>
</dbReference>
<dbReference type="SMR" id="Q81LG9"/>
<dbReference type="STRING" id="261594.GBAA_4650"/>
<dbReference type="DNASU" id="1084980"/>
<dbReference type="GeneID" id="45024291"/>
<dbReference type="KEGG" id="ban:BA_4650"/>
<dbReference type="KEGG" id="bar:GBAA_4650"/>
<dbReference type="KEGG" id="bat:BAS4315"/>
<dbReference type="PATRIC" id="fig|198094.11.peg.4615"/>
<dbReference type="eggNOG" id="COG2255">
    <property type="taxonomic scope" value="Bacteria"/>
</dbReference>
<dbReference type="HOGENOM" id="CLU_055599_1_0_9"/>
<dbReference type="OMA" id="IHRMSRP"/>
<dbReference type="OrthoDB" id="9804478at2"/>
<dbReference type="Proteomes" id="UP000000427">
    <property type="component" value="Chromosome"/>
</dbReference>
<dbReference type="Proteomes" id="UP000000594">
    <property type="component" value="Chromosome"/>
</dbReference>
<dbReference type="GO" id="GO:0005737">
    <property type="term" value="C:cytoplasm"/>
    <property type="evidence" value="ECO:0007669"/>
    <property type="project" value="UniProtKB-SubCell"/>
</dbReference>
<dbReference type="GO" id="GO:0048476">
    <property type="term" value="C:Holliday junction resolvase complex"/>
    <property type="evidence" value="ECO:0007669"/>
    <property type="project" value="UniProtKB-UniRule"/>
</dbReference>
<dbReference type="GO" id="GO:0005524">
    <property type="term" value="F:ATP binding"/>
    <property type="evidence" value="ECO:0007669"/>
    <property type="project" value="UniProtKB-UniRule"/>
</dbReference>
<dbReference type="GO" id="GO:0016887">
    <property type="term" value="F:ATP hydrolysis activity"/>
    <property type="evidence" value="ECO:0007669"/>
    <property type="project" value="InterPro"/>
</dbReference>
<dbReference type="GO" id="GO:0000400">
    <property type="term" value="F:four-way junction DNA binding"/>
    <property type="evidence" value="ECO:0007669"/>
    <property type="project" value="UniProtKB-UniRule"/>
</dbReference>
<dbReference type="GO" id="GO:0009378">
    <property type="term" value="F:four-way junction helicase activity"/>
    <property type="evidence" value="ECO:0007669"/>
    <property type="project" value="InterPro"/>
</dbReference>
<dbReference type="GO" id="GO:0006310">
    <property type="term" value="P:DNA recombination"/>
    <property type="evidence" value="ECO:0007669"/>
    <property type="project" value="UniProtKB-UniRule"/>
</dbReference>
<dbReference type="GO" id="GO:0006281">
    <property type="term" value="P:DNA repair"/>
    <property type="evidence" value="ECO:0007669"/>
    <property type="project" value="UniProtKB-UniRule"/>
</dbReference>
<dbReference type="CDD" id="cd00009">
    <property type="entry name" value="AAA"/>
    <property type="match status" value="1"/>
</dbReference>
<dbReference type="Gene3D" id="1.10.8.60">
    <property type="match status" value="1"/>
</dbReference>
<dbReference type="Gene3D" id="3.40.50.300">
    <property type="entry name" value="P-loop containing nucleotide triphosphate hydrolases"/>
    <property type="match status" value="1"/>
</dbReference>
<dbReference type="Gene3D" id="1.10.10.10">
    <property type="entry name" value="Winged helix-like DNA-binding domain superfamily/Winged helix DNA-binding domain"/>
    <property type="match status" value="1"/>
</dbReference>
<dbReference type="HAMAP" id="MF_00016">
    <property type="entry name" value="DNA_HJ_migration_RuvB"/>
    <property type="match status" value="1"/>
</dbReference>
<dbReference type="InterPro" id="IPR003593">
    <property type="entry name" value="AAA+_ATPase"/>
</dbReference>
<dbReference type="InterPro" id="IPR041445">
    <property type="entry name" value="AAA_lid_4"/>
</dbReference>
<dbReference type="InterPro" id="IPR004605">
    <property type="entry name" value="DNA_helicase_Holl-junc_RuvB"/>
</dbReference>
<dbReference type="InterPro" id="IPR027417">
    <property type="entry name" value="P-loop_NTPase"/>
</dbReference>
<dbReference type="InterPro" id="IPR008824">
    <property type="entry name" value="RuvB-like_N"/>
</dbReference>
<dbReference type="InterPro" id="IPR008823">
    <property type="entry name" value="RuvB_C"/>
</dbReference>
<dbReference type="InterPro" id="IPR036388">
    <property type="entry name" value="WH-like_DNA-bd_sf"/>
</dbReference>
<dbReference type="InterPro" id="IPR036390">
    <property type="entry name" value="WH_DNA-bd_sf"/>
</dbReference>
<dbReference type="NCBIfam" id="NF000868">
    <property type="entry name" value="PRK00080.1"/>
    <property type="match status" value="1"/>
</dbReference>
<dbReference type="NCBIfam" id="TIGR00635">
    <property type="entry name" value="ruvB"/>
    <property type="match status" value="1"/>
</dbReference>
<dbReference type="PANTHER" id="PTHR42848">
    <property type="match status" value="1"/>
</dbReference>
<dbReference type="PANTHER" id="PTHR42848:SF1">
    <property type="entry name" value="HOLLIDAY JUNCTION BRANCH MIGRATION COMPLEX SUBUNIT RUVB"/>
    <property type="match status" value="1"/>
</dbReference>
<dbReference type="Pfam" id="PF17864">
    <property type="entry name" value="AAA_lid_4"/>
    <property type="match status" value="1"/>
</dbReference>
<dbReference type="Pfam" id="PF05491">
    <property type="entry name" value="RuvB_C"/>
    <property type="match status" value="1"/>
</dbReference>
<dbReference type="Pfam" id="PF05496">
    <property type="entry name" value="RuvB_N"/>
    <property type="match status" value="1"/>
</dbReference>
<dbReference type="SMART" id="SM00382">
    <property type="entry name" value="AAA"/>
    <property type="match status" value="1"/>
</dbReference>
<dbReference type="SUPFAM" id="SSF52540">
    <property type="entry name" value="P-loop containing nucleoside triphosphate hydrolases"/>
    <property type="match status" value="1"/>
</dbReference>
<dbReference type="SUPFAM" id="SSF46785">
    <property type="entry name" value="Winged helix' DNA-binding domain"/>
    <property type="match status" value="1"/>
</dbReference>